<accession>Q4V8A3</accession>
<feature type="chain" id="PRO_0000291538" description="Dual specificity tyrosine-phosphorylation-regulated kinase 3">
    <location>
        <begin position="1"/>
        <end position="586"/>
    </location>
</feature>
<feature type="domain" description="Protein kinase" evidence="4">
    <location>
        <begin position="208"/>
        <end position="521"/>
    </location>
</feature>
<feature type="region of interest" description="Disordered" evidence="1">
    <location>
        <begin position="1"/>
        <end position="187"/>
    </location>
</feature>
<feature type="short sequence motif" description="Nuclear localization signal" evidence="1">
    <location>
        <begin position="467"/>
        <end position="480"/>
    </location>
</feature>
<feature type="compositionally biased region" description="Basic and acidic residues" evidence="6">
    <location>
        <begin position="1"/>
        <end position="13"/>
    </location>
</feature>
<feature type="active site" description="Proton acceptor" evidence="2 4 5">
    <location>
        <position position="334"/>
    </location>
</feature>
<feature type="binding site" evidence="2 4">
    <location>
        <begin position="214"/>
        <end position="222"/>
    </location>
    <ligand>
        <name>ATP</name>
        <dbReference type="ChEBI" id="CHEBI:30616"/>
    </ligand>
</feature>
<feature type="binding site" evidence="3 4">
    <location>
        <position position="237"/>
    </location>
    <ligand>
        <name>ATP</name>
        <dbReference type="ChEBI" id="CHEBI:30616"/>
    </ligand>
</feature>
<feature type="binding site" evidence="4">
    <location>
        <begin position="287"/>
        <end position="290"/>
    </location>
    <ligand>
        <name>ATP</name>
        <dbReference type="ChEBI" id="CHEBI:30616"/>
    </ligand>
</feature>
<feature type="modified residue" description="Phosphotyrosine" evidence="3">
    <location>
        <position position="368"/>
    </location>
</feature>
<comment type="function">
    <text evidence="1">Dual-specificity protein kinase that promotes disassembly of several types of membraneless organelles during mitosis, such as stress granules, nuclear speckles and pericentriolar material. Dual-specificity tyrosine-regulated kinases (DYRKs) autophosphorylate a critical tyrosine residue in their activation loop and phosphorylate their substrate on serine and threonine residues. Acts as a central dissolvase of membraneless organelles during the G2-to-M transition, after the nuclear-envelope breakdown: acts by mediating phosphorylation of multiple serine and threonine residues in unstructured domains of proteins, such as SRRM1 and PCM1. Does not mediate disassembly of all membraneless organelles: disassembly of P-body and nucleolus is not regulated by DYRK3. Dissolution of membraneless organelles at the onset of mitosis is also required to release mitotic regulators, such as ZNF207, from liquid-unmixed organelles where they are sequestered and keep them dissolved during mitosis. Regulates mTORC1 by mediating the dissolution of stress granules: during stressful conditions, DYRK3 partitions from the cytosol to the stress granule, together with mTORC1 components, which prevents mTORC1 signaling. When stress signals are gone, the kinase activity of DYRK3 is required for the dissolution of stress granule and mTORC1 relocation to the cytosol: acts by mediating the phosphorylation of the mTORC1 inhibitor AKT1S1, allowing full reactivation of mTORC1 signaling. Also acts as a negative regulator of EPO-dependent erythropoiesis: may place an upper limit on red cell production during stress erythropoiesis. Inhibits cell death due to cytokine withdrawal in hematopoietic progenitor cells. Promotes cell survival upon genotoxic stress through phosphorylation of SIRT1: this in turn inhibits p53/TP53 activity and apoptosis.</text>
</comment>
<comment type="catalytic activity">
    <reaction evidence="1">
        <text>L-seryl-[protein] + ATP = O-phospho-L-seryl-[protein] + ADP + H(+)</text>
        <dbReference type="Rhea" id="RHEA:17989"/>
        <dbReference type="Rhea" id="RHEA-COMP:9863"/>
        <dbReference type="Rhea" id="RHEA-COMP:11604"/>
        <dbReference type="ChEBI" id="CHEBI:15378"/>
        <dbReference type="ChEBI" id="CHEBI:29999"/>
        <dbReference type="ChEBI" id="CHEBI:30616"/>
        <dbReference type="ChEBI" id="CHEBI:83421"/>
        <dbReference type="ChEBI" id="CHEBI:456216"/>
        <dbReference type="EC" id="2.7.12.1"/>
    </reaction>
</comment>
<comment type="catalytic activity">
    <reaction evidence="1">
        <text>L-threonyl-[protein] + ATP = O-phospho-L-threonyl-[protein] + ADP + H(+)</text>
        <dbReference type="Rhea" id="RHEA:46608"/>
        <dbReference type="Rhea" id="RHEA-COMP:11060"/>
        <dbReference type="Rhea" id="RHEA-COMP:11605"/>
        <dbReference type="ChEBI" id="CHEBI:15378"/>
        <dbReference type="ChEBI" id="CHEBI:30013"/>
        <dbReference type="ChEBI" id="CHEBI:30616"/>
        <dbReference type="ChEBI" id="CHEBI:61977"/>
        <dbReference type="ChEBI" id="CHEBI:456216"/>
        <dbReference type="EC" id="2.7.12.1"/>
    </reaction>
</comment>
<comment type="catalytic activity">
    <reaction evidence="1">
        <text>L-tyrosyl-[protein] + ATP = O-phospho-L-tyrosyl-[protein] + ADP + H(+)</text>
        <dbReference type="Rhea" id="RHEA:10596"/>
        <dbReference type="Rhea" id="RHEA-COMP:10136"/>
        <dbReference type="Rhea" id="RHEA-COMP:20101"/>
        <dbReference type="ChEBI" id="CHEBI:15378"/>
        <dbReference type="ChEBI" id="CHEBI:30616"/>
        <dbReference type="ChEBI" id="CHEBI:46858"/>
        <dbReference type="ChEBI" id="CHEBI:61978"/>
        <dbReference type="ChEBI" id="CHEBI:456216"/>
        <dbReference type="EC" id="2.7.12.1"/>
    </reaction>
</comment>
<comment type="cofactor">
    <cofactor evidence="1">
        <name>Mg(2+)</name>
        <dbReference type="ChEBI" id="CHEBI:18420"/>
    </cofactor>
</comment>
<comment type="activity regulation">
    <text evidence="1">Protein kinase activity is activated following autophosphorylation at Tyr-368.</text>
</comment>
<comment type="subunit">
    <text evidence="3">Interacts with SIRT1.</text>
</comment>
<comment type="subcellular location">
    <subcellularLocation>
        <location evidence="1">Nucleus</location>
    </subcellularLocation>
    <subcellularLocation>
        <location evidence="1">Cytoplasm</location>
    </subcellularLocation>
    <subcellularLocation>
        <location evidence="1">Nucleus speckle</location>
    </subcellularLocation>
    <subcellularLocation>
        <location evidence="1">Cytoplasmic granule</location>
    </subcellularLocation>
    <subcellularLocation>
        <location evidence="1">Cytoplasm</location>
        <location evidence="1">Cytoskeleton</location>
        <location evidence="1">Microtubule organizing center</location>
        <location evidence="1">Centrosome</location>
    </subcellularLocation>
    <text evidence="1">Associates with membraneless organelles in the cytoplasm and nucleus. Shuttles between cytoplasm and stress granules. Localized predominantly on distinct speckles distributed throughout the cytoplasm of the cell. At low concentration, showns a homogeneous distribution throughout the cytoplasm and does not condense in speckles. During oxidative and osmotic stress, localizes to stress granules.</text>
</comment>
<comment type="tissue specificity">
    <text evidence="7 8">Expressed predominantly in testis (PubMed:9748265). Expressed in late pachytene spermatocytes (PubMed:17292540).</text>
</comment>
<comment type="domain">
    <text evidence="1">The N-terminal domain, which is intrinsically disordered, is required for stress granule localization.</text>
</comment>
<comment type="PTM">
    <text evidence="3">Protein kinase activity is activated following autophosphorylation at Tyr-368.</text>
</comment>
<comment type="PTM">
    <text evidence="1">Ubiquitinated at anaphase by the anaphase-promoting complex (APC/C), leading to its degradation by the proteasome.</text>
</comment>
<comment type="similarity">
    <text evidence="9">Belongs to the protein kinase superfamily. CMGC Ser/Thr protein kinase family. MNB/DYRK subfamily.</text>
</comment>
<protein>
    <recommendedName>
        <fullName>Dual specificity tyrosine-phosphorylation-regulated kinase 3</fullName>
        <ecNumber evidence="1">2.7.12.1</ecNumber>
    </recommendedName>
</protein>
<proteinExistence type="evidence at transcript level"/>
<gene>
    <name evidence="11" type="primary">Dyrk3</name>
</gene>
<dbReference type="EC" id="2.7.12.1" evidence="1"/>
<dbReference type="EMBL" id="BC097474">
    <property type="protein sequence ID" value="AAH97474.1"/>
    <property type="molecule type" value="mRNA"/>
</dbReference>
<dbReference type="RefSeq" id="NP_001019938.1">
    <property type="nucleotide sequence ID" value="NM_001024767.1"/>
</dbReference>
<dbReference type="SMR" id="Q4V8A3"/>
<dbReference type="FunCoup" id="Q4V8A3">
    <property type="interactions" value="448"/>
</dbReference>
<dbReference type="STRING" id="10116.ENSRNOP00000006502"/>
<dbReference type="iPTMnet" id="Q4V8A3"/>
<dbReference type="PhosphoSitePlus" id="Q4V8A3"/>
<dbReference type="PaxDb" id="10116-ENSRNOP00000006502"/>
<dbReference type="Ensembl" id="ENSRNOT00000006502.6">
    <property type="protein sequence ID" value="ENSRNOP00000006502.5"/>
    <property type="gene ID" value="ENSRNOG00000004870.6"/>
</dbReference>
<dbReference type="GeneID" id="304775"/>
<dbReference type="KEGG" id="rno:304775"/>
<dbReference type="UCSC" id="RGD:1310924">
    <property type="organism name" value="rat"/>
</dbReference>
<dbReference type="AGR" id="RGD:1310924"/>
<dbReference type="CTD" id="8444"/>
<dbReference type="RGD" id="1310924">
    <property type="gene designation" value="Dyrk3"/>
</dbReference>
<dbReference type="eggNOG" id="KOG0667">
    <property type="taxonomic scope" value="Eukaryota"/>
</dbReference>
<dbReference type="GeneTree" id="ENSGT00940000159878"/>
<dbReference type="InParanoid" id="Q4V8A3"/>
<dbReference type="OMA" id="HPWISKC"/>
<dbReference type="OrthoDB" id="9332038at2759"/>
<dbReference type="PhylomeDB" id="Q4V8A3"/>
<dbReference type="PRO" id="PR:Q4V8A3"/>
<dbReference type="Proteomes" id="UP000002494">
    <property type="component" value="Chromosome 13"/>
</dbReference>
<dbReference type="GO" id="GO:0005737">
    <property type="term" value="C:cytoplasm"/>
    <property type="evidence" value="ECO:0000250"/>
    <property type="project" value="UniProtKB"/>
</dbReference>
<dbReference type="GO" id="GO:0010494">
    <property type="term" value="C:cytoplasmic stress granule"/>
    <property type="evidence" value="ECO:0000250"/>
    <property type="project" value="UniProtKB"/>
</dbReference>
<dbReference type="GO" id="GO:0005856">
    <property type="term" value="C:cytoskeleton"/>
    <property type="evidence" value="ECO:0000318"/>
    <property type="project" value="GO_Central"/>
</dbReference>
<dbReference type="GO" id="GO:0016607">
    <property type="term" value="C:nuclear speck"/>
    <property type="evidence" value="ECO:0000250"/>
    <property type="project" value="UniProtKB"/>
</dbReference>
<dbReference type="GO" id="GO:0005634">
    <property type="term" value="C:nucleus"/>
    <property type="evidence" value="ECO:0000266"/>
    <property type="project" value="RGD"/>
</dbReference>
<dbReference type="GO" id="GO:0000242">
    <property type="term" value="C:pericentriolar material"/>
    <property type="evidence" value="ECO:0000250"/>
    <property type="project" value="UniProtKB"/>
</dbReference>
<dbReference type="GO" id="GO:0005524">
    <property type="term" value="F:ATP binding"/>
    <property type="evidence" value="ECO:0000266"/>
    <property type="project" value="RGD"/>
</dbReference>
<dbReference type="GO" id="GO:0000287">
    <property type="term" value="F:magnesium ion binding"/>
    <property type="evidence" value="ECO:0000266"/>
    <property type="project" value="RGD"/>
</dbReference>
<dbReference type="GO" id="GO:0004672">
    <property type="term" value="F:protein kinase activity"/>
    <property type="evidence" value="ECO:0000266"/>
    <property type="project" value="RGD"/>
</dbReference>
<dbReference type="GO" id="GO:0106310">
    <property type="term" value="F:protein serine kinase activity"/>
    <property type="evidence" value="ECO:0007669"/>
    <property type="project" value="RHEA"/>
</dbReference>
<dbReference type="GO" id="GO:0004674">
    <property type="term" value="F:protein serine/threonine kinase activity"/>
    <property type="evidence" value="ECO:0000250"/>
    <property type="project" value="UniProtKB"/>
</dbReference>
<dbReference type="GO" id="GO:0004712">
    <property type="term" value="F:protein serine/threonine/tyrosine kinase activity"/>
    <property type="evidence" value="ECO:0007669"/>
    <property type="project" value="UniProtKB-EC"/>
</dbReference>
<dbReference type="GO" id="GO:0004713">
    <property type="term" value="F:protein tyrosine kinase activity"/>
    <property type="evidence" value="ECO:0007669"/>
    <property type="project" value="UniProtKB-KW"/>
</dbReference>
<dbReference type="GO" id="GO:0051301">
    <property type="term" value="P:cell division"/>
    <property type="evidence" value="ECO:0007669"/>
    <property type="project" value="UniProtKB-KW"/>
</dbReference>
<dbReference type="GO" id="GO:0030218">
    <property type="term" value="P:erythrocyte differentiation"/>
    <property type="evidence" value="ECO:0000266"/>
    <property type="project" value="RGD"/>
</dbReference>
<dbReference type="GO" id="GO:0043066">
    <property type="term" value="P:negative regulation of apoptotic process"/>
    <property type="evidence" value="ECO:0000250"/>
    <property type="project" value="UniProtKB"/>
</dbReference>
<dbReference type="GO" id="GO:0043518">
    <property type="term" value="P:negative regulation of DNA damage response, signal transduction by p53 class mediator"/>
    <property type="evidence" value="ECO:0000266"/>
    <property type="project" value="RGD"/>
</dbReference>
<dbReference type="GO" id="GO:0035063">
    <property type="term" value="P:nuclear speck organization"/>
    <property type="evidence" value="ECO:0000250"/>
    <property type="project" value="UniProtKB"/>
</dbReference>
<dbReference type="GO" id="GO:1903008">
    <property type="term" value="P:organelle disassembly"/>
    <property type="evidence" value="ECO:0000250"/>
    <property type="project" value="UniProtKB"/>
</dbReference>
<dbReference type="GO" id="GO:1902751">
    <property type="term" value="P:positive regulation of cell cycle G2/M phase transition"/>
    <property type="evidence" value="ECO:0000250"/>
    <property type="project" value="UniProtKB"/>
</dbReference>
<dbReference type="GO" id="GO:0006468">
    <property type="term" value="P:protein phosphorylation"/>
    <property type="evidence" value="ECO:0000250"/>
    <property type="project" value="UniProtKB"/>
</dbReference>
<dbReference type="GO" id="GO:0080135">
    <property type="term" value="P:regulation of cellular response to stress"/>
    <property type="evidence" value="ECO:0000250"/>
    <property type="project" value="UniProtKB"/>
</dbReference>
<dbReference type="GO" id="GO:1903432">
    <property type="term" value="P:regulation of TORC1 signaling"/>
    <property type="evidence" value="ECO:0000250"/>
    <property type="project" value="UniProtKB"/>
</dbReference>
<dbReference type="GO" id="GO:0035617">
    <property type="term" value="P:stress granule disassembly"/>
    <property type="evidence" value="ECO:0000250"/>
    <property type="project" value="UniProtKB"/>
</dbReference>
<dbReference type="CDD" id="cd14224">
    <property type="entry name" value="PKc_DYRK2_3"/>
    <property type="match status" value="1"/>
</dbReference>
<dbReference type="FunFam" id="1.10.510.10:FF:000112">
    <property type="entry name" value="Putative dual specificity tyrosine-phosphorylation-regulated kinase 2"/>
    <property type="match status" value="1"/>
</dbReference>
<dbReference type="FunFam" id="3.30.200.20:FF:000127">
    <property type="entry name" value="Putative dual specificity tyrosine-phosphorylation-regulated kinase 2"/>
    <property type="match status" value="1"/>
</dbReference>
<dbReference type="Gene3D" id="3.30.10.30">
    <property type="entry name" value="DYRK"/>
    <property type="match status" value="1"/>
</dbReference>
<dbReference type="Gene3D" id="3.30.200.20">
    <property type="entry name" value="Phosphorylase Kinase, domain 1"/>
    <property type="match status" value="1"/>
</dbReference>
<dbReference type="Gene3D" id="1.10.510.10">
    <property type="entry name" value="Transferase(Phosphotransferase) domain 1"/>
    <property type="match status" value="1"/>
</dbReference>
<dbReference type="InterPro" id="IPR042521">
    <property type="entry name" value="DYRK"/>
</dbReference>
<dbReference type="InterPro" id="IPR011009">
    <property type="entry name" value="Kinase-like_dom_sf"/>
</dbReference>
<dbReference type="InterPro" id="IPR000719">
    <property type="entry name" value="Prot_kinase_dom"/>
</dbReference>
<dbReference type="InterPro" id="IPR017441">
    <property type="entry name" value="Protein_kinase_ATP_BS"/>
</dbReference>
<dbReference type="InterPro" id="IPR008271">
    <property type="entry name" value="Ser/Thr_kinase_AS"/>
</dbReference>
<dbReference type="InterPro" id="IPR050494">
    <property type="entry name" value="Ser_Thr_dual-spec_kinase"/>
</dbReference>
<dbReference type="PANTHER" id="PTHR24058">
    <property type="entry name" value="DUAL SPECIFICITY PROTEIN KINASE"/>
    <property type="match status" value="1"/>
</dbReference>
<dbReference type="PANTHER" id="PTHR24058:SF35">
    <property type="entry name" value="DUAL SPECIFICITY TYROSINE-PHOSPHORYLATION-REGULATED KINASE 3"/>
    <property type="match status" value="1"/>
</dbReference>
<dbReference type="Pfam" id="PF00069">
    <property type="entry name" value="Pkinase"/>
    <property type="match status" value="1"/>
</dbReference>
<dbReference type="SMART" id="SM00220">
    <property type="entry name" value="S_TKc"/>
    <property type="match status" value="1"/>
</dbReference>
<dbReference type="SUPFAM" id="SSF56112">
    <property type="entry name" value="Protein kinase-like (PK-like)"/>
    <property type="match status" value="1"/>
</dbReference>
<dbReference type="PROSITE" id="PS00107">
    <property type="entry name" value="PROTEIN_KINASE_ATP"/>
    <property type="match status" value="1"/>
</dbReference>
<dbReference type="PROSITE" id="PS50011">
    <property type="entry name" value="PROTEIN_KINASE_DOM"/>
    <property type="match status" value="1"/>
</dbReference>
<dbReference type="PROSITE" id="PS00108">
    <property type="entry name" value="PROTEIN_KINASE_ST"/>
    <property type="match status" value="1"/>
</dbReference>
<organism>
    <name type="scientific">Rattus norvegicus</name>
    <name type="common">Rat</name>
    <dbReference type="NCBI Taxonomy" id="10116"/>
    <lineage>
        <taxon>Eukaryota</taxon>
        <taxon>Metazoa</taxon>
        <taxon>Chordata</taxon>
        <taxon>Craniata</taxon>
        <taxon>Vertebrata</taxon>
        <taxon>Euteleostomi</taxon>
        <taxon>Mammalia</taxon>
        <taxon>Eutheria</taxon>
        <taxon>Euarchontoglires</taxon>
        <taxon>Glires</taxon>
        <taxon>Rodentia</taxon>
        <taxon>Myomorpha</taxon>
        <taxon>Muroidea</taxon>
        <taxon>Muridae</taxon>
        <taxon>Murinae</taxon>
        <taxon>Rattus</taxon>
    </lineage>
</organism>
<name>DYRK3_RAT</name>
<sequence>MGGAARERGRKDAALPGAGLPPQQRRLGDGVYDTFMMIDETKCPPYTNTLCNPSEAPVSRRLNITTEPFTRGHTQHFVSGGVMKVEQLFQEFGSRRTSTLQSDGVSNSEKSSPASQGKSSDSLGTVKCSLSSRPSKVLPLTPEQALKQYKHHLTAYEKLEIISYPEIYFVGPNAKKRQGVIGGPNNGGYDDADGAYIHVPRDHLAYRYEVLKIIGKGSFGQVARVYDHKLRQYVALKMVRNEKRFHRQAAEEIRILEHLKKQDKTGSMNVIHMLESFTFRNHVCMAFELLSIDLYELIKKNKFQGFSVQLVRKFAQSILQSLDALHKNKIIHCDLKPENILLKHHGRSATKVIDFGSSCFEYQKLYTYIQSRFYRAPEIILGCRYSTPIDIWSFGCILAELLTGQPLFPGEDEGDQLACMMELLGMPPQKLLEQSKRAKYFINSKGLPRYCSVTTQTDGRVVLLGGRSRRGKKRGPPGSKDWAAALKGCDDYLFIEFLKRCLQWDPSARLTPAQALRHPWISKSAPRPLTTDKVSGKRVVNPTNAFQGLGSKLPPVVGIASKLKANLMSETSGSIPLCSVLPKLIS</sequence>
<keyword id="KW-0067">ATP-binding</keyword>
<keyword id="KW-0131">Cell cycle</keyword>
<keyword id="KW-0132">Cell division</keyword>
<keyword id="KW-0963">Cytoplasm</keyword>
<keyword id="KW-0206">Cytoskeleton</keyword>
<keyword id="KW-0418">Kinase</keyword>
<keyword id="KW-0460">Magnesium</keyword>
<keyword id="KW-0479">Metal-binding</keyword>
<keyword id="KW-0498">Mitosis</keyword>
<keyword id="KW-0547">Nucleotide-binding</keyword>
<keyword id="KW-0539">Nucleus</keyword>
<keyword id="KW-0597">Phosphoprotein</keyword>
<keyword id="KW-1185">Reference proteome</keyword>
<keyword id="KW-0723">Serine/threonine-protein kinase</keyword>
<keyword id="KW-0808">Transferase</keyword>
<keyword id="KW-0829">Tyrosine-protein kinase</keyword>
<keyword id="KW-0832">Ubl conjugation</keyword>
<evidence type="ECO:0000250" key="1">
    <source>
        <dbReference type="UniProtKB" id="O43781"/>
    </source>
</evidence>
<evidence type="ECO:0000250" key="2">
    <source>
        <dbReference type="UniProtKB" id="P28523"/>
    </source>
</evidence>
<evidence type="ECO:0000250" key="3">
    <source>
        <dbReference type="UniProtKB" id="Q922Y0"/>
    </source>
</evidence>
<evidence type="ECO:0000255" key="4">
    <source>
        <dbReference type="PROSITE-ProRule" id="PRU00159"/>
    </source>
</evidence>
<evidence type="ECO:0000255" key="5">
    <source>
        <dbReference type="PROSITE-ProRule" id="PRU10027"/>
    </source>
</evidence>
<evidence type="ECO:0000256" key="6">
    <source>
        <dbReference type="SAM" id="MobiDB-lite"/>
    </source>
</evidence>
<evidence type="ECO:0000269" key="7">
    <source>
    </source>
</evidence>
<evidence type="ECO:0000269" key="8">
    <source>
    </source>
</evidence>
<evidence type="ECO:0000305" key="9"/>
<evidence type="ECO:0000312" key="10">
    <source>
        <dbReference type="EMBL" id="AAH97474.1"/>
    </source>
</evidence>
<evidence type="ECO:0000312" key="11">
    <source>
        <dbReference type="RGD" id="1310924"/>
    </source>
</evidence>
<reference evidence="10" key="1">
    <citation type="journal article" date="2004" name="Genome Res.">
        <title>The status, quality, and expansion of the NIH full-length cDNA project: the Mammalian Gene Collection (MGC).</title>
        <authorList>
            <consortium name="The MGC Project Team"/>
        </authorList>
    </citation>
    <scope>NUCLEOTIDE SEQUENCE [LARGE SCALE MRNA]</scope>
    <source>
        <tissue evidence="10">Testis</tissue>
    </source>
</reference>
<reference key="2">
    <citation type="journal article" date="1998" name="J. Biol. Chem.">
        <title>Sequence characteristics, subcellular localization, and substrate specificity of DYRK-related kinases, a novel family of dual specificity protein kinases.</title>
        <authorList>
            <person name="Becker W."/>
            <person name="Weber Y."/>
            <person name="Wetzel K."/>
            <person name="Eirmbter K."/>
            <person name="Tejedor F.J."/>
            <person name="Joost H.-G."/>
        </authorList>
    </citation>
    <scope>TISSUE SPECIFICITY</scope>
    <source>
        <tissue>Fetal brain</tissue>
    </source>
</reference>
<reference key="3">
    <citation type="journal article" date="2007" name="Mol. Cell. Endocrinol.">
        <title>The expression of the testis-specific Dyrk4 kinase is highly restricted to step 8 spermatids but is not required for male fertility in mice.</title>
        <authorList>
            <person name="Sacher F."/>
            <person name="Moeller C."/>
            <person name="Bone W."/>
            <person name="Gottwald U."/>
            <person name="Fritsch M."/>
        </authorList>
    </citation>
    <scope>TISSUE SPECIFICITY</scope>
</reference>